<comment type="function">
    <text evidence="1">Involved in the biosynthesis of osmoregulated periplasmic glucans (OPGs).</text>
</comment>
<comment type="function">
    <text>Pathogenicity factor. Required for both the expression of disease symptoms on host plants and the development of the hypersensitive reaction on non-host plants.</text>
</comment>
<comment type="pathway">
    <text>Glycan metabolism; osmoregulated periplasmic glucan (OPG) biosynthesis.</text>
</comment>
<comment type="subcellular location">
    <subcellularLocation>
        <location evidence="1">Cell inner membrane</location>
        <topology evidence="1">Multi-pass membrane protein</topology>
    </subcellularLocation>
</comment>
<comment type="similarity">
    <text evidence="3">Belongs to the glycosyltransferase 2 family. OpgH subfamily.</text>
</comment>
<comment type="sequence caution" evidence="3">
    <conflict type="erroneous termination">
        <sequence resource="EMBL" id="M23555"/>
    </conflict>
    <text>Truncated C-terminus.</text>
</comment>
<comment type="sequence caution" evidence="3">
    <conflict type="frameshift">
        <sequence resource="EMBL" id="M23555"/>
    </conflict>
</comment>
<reference key="1">
    <citation type="journal article" date="1988" name="J. Bacteriol.">
        <title>Molecular analysis of a pathogenicity locus in Pseudomonas syringae pv. syringae.</title>
        <authorList>
            <person name="Mukhopadhyay P."/>
            <person name="Williams J."/>
            <person name="Mills D."/>
        </authorList>
    </citation>
    <scope>NUCLEOTIDE SEQUENCE [MRNA]</scope>
    <source>
        <strain>R32</strain>
    </source>
</reference>
<gene>
    <name type="primary">opgH</name>
    <name type="synonym">hrpM</name>
</gene>
<organism>
    <name type="scientific">Pseudomonas syringae pv. syringae</name>
    <dbReference type="NCBI Taxonomy" id="321"/>
    <lineage>
        <taxon>Bacteria</taxon>
        <taxon>Pseudomonadati</taxon>
        <taxon>Pseudomonadota</taxon>
        <taxon>Gammaproteobacteria</taxon>
        <taxon>Pseudomonadales</taxon>
        <taxon>Pseudomonadaceae</taxon>
        <taxon>Pseudomonas</taxon>
        <taxon>Pseudomonas syringae</taxon>
    </lineage>
</organism>
<protein>
    <recommendedName>
        <fullName>Glucans biosynthesis glucosyltransferase H</fullName>
        <ecNumber>2.4.1.-</ecNumber>
    </recommendedName>
</protein>
<sequence length="804" mass="91130">MSNSLPVPMSLNEYLAHLPMSDEQRAELAGCTTFAELHERLSAQPVTDPAEAAQASVGRRLTLTPRDQLEDAEMLGVDASGRLCLKATPPIRRTKVVPEPWRTNILVRGWRRLTGKGNPPKPEHDDLPRDLPKARWRTVGSIRRYILLILMLGQTIVAGWYMKGILPYQGWSLVSLDEITRQTFVQTALQVMPYALQTSILLLFGILFCWVSAGFWTALMGFLELLTGRDKYRISGASAGNEPIEKGARTALVMPICNEDVPRVFAGLRATFESVAATGDLDRFDFFVLSDTNETDIAVAEQQAWLDVCRETKGFGKIFYRRRRRRVKRKSGNLDDFCRRWGGDYRYMVVLDADSVMSGECLTSLVRLMEATPDAGIIQTAPRASGMDTLYARMQQFATRVYGPLFTAGLHFWQLGESHYWGHNAIIRMKPFIEHCALAPLPGKGAFAGAILSHDFVEAALMRRAGWGVWIAYDLPGSYEELPPNLLDELKRDRRWCHGNLMNFRLFLVKGMHPVHRAVFLTGVMSYLSAPLWFFFLVLSTALLAVNTLMEPTYFLEPRQLYPLWPQWHPEKAVALFSTTIVLLFLPKLLSVILIWAKGAKGFGGKFKVTVSMLLEMLFSVLLAPVRMLFHTRFVLAAFLGWAATWNSPQRDDDSTPWIEAVKRHGPQTLLGACWALLVFWLNPSFLWWLAPIVVSLMLSIPVSVISSRTNLGVKARDEKFFLIPEEFEPPQELISTDRYTYENRWHALKQGFIRAVVDPRQNALACALATSRHVRLSRLKWCVWSVSIRHSRSVRQNSAIRNA</sequence>
<name>OPGH_PSESY</name>
<dbReference type="EC" id="2.4.1.-"/>
<dbReference type="EMBL" id="M23555">
    <property type="status" value="NOT_ANNOTATED_CDS"/>
    <property type="molecule type" value="mRNA"/>
</dbReference>
<dbReference type="PIR" id="B31383">
    <property type="entry name" value="B31383"/>
</dbReference>
<dbReference type="CAZy" id="GT2">
    <property type="family name" value="Glycosyltransferase Family 2"/>
</dbReference>
<dbReference type="UniPathway" id="UPA00637"/>
<dbReference type="GO" id="GO:0005886">
    <property type="term" value="C:plasma membrane"/>
    <property type="evidence" value="ECO:0007669"/>
    <property type="project" value="UniProtKB-SubCell"/>
</dbReference>
<dbReference type="GO" id="GO:0016758">
    <property type="term" value="F:hexosyltransferase activity"/>
    <property type="evidence" value="ECO:0007669"/>
    <property type="project" value="UniProtKB-UniRule"/>
</dbReference>
<dbReference type="GO" id="GO:0009250">
    <property type="term" value="P:glucan biosynthetic process"/>
    <property type="evidence" value="ECO:0007669"/>
    <property type="project" value="UniProtKB-UniRule"/>
</dbReference>
<dbReference type="CDD" id="cd04191">
    <property type="entry name" value="Glucan_BSP_MdoH"/>
    <property type="match status" value="1"/>
</dbReference>
<dbReference type="FunFam" id="3.90.550.10:FF:000047">
    <property type="entry name" value="Glucans biosynthesis glucosyltransferase H"/>
    <property type="match status" value="1"/>
</dbReference>
<dbReference type="Gene3D" id="3.90.550.10">
    <property type="entry name" value="Spore Coat Polysaccharide Biosynthesis Protein SpsA, Chain A"/>
    <property type="match status" value="1"/>
</dbReference>
<dbReference type="HAMAP" id="MF_01072">
    <property type="entry name" value="MdoH_OpgH"/>
    <property type="match status" value="1"/>
</dbReference>
<dbReference type="InterPro" id="IPR023725">
    <property type="entry name" value="Glucans_biosynth_gluTrFase_H"/>
</dbReference>
<dbReference type="InterPro" id="IPR001173">
    <property type="entry name" value="Glyco_trans_2-like"/>
</dbReference>
<dbReference type="InterPro" id="IPR050321">
    <property type="entry name" value="Glycosyltr_2/OpgH_subfam"/>
</dbReference>
<dbReference type="InterPro" id="IPR029044">
    <property type="entry name" value="Nucleotide-diphossugar_trans"/>
</dbReference>
<dbReference type="NCBIfam" id="NF003955">
    <property type="entry name" value="PRK05454.1-1"/>
    <property type="match status" value="1"/>
</dbReference>
<dbReference type="NCBIfam" id="NF003958">
    <property type="entry name" value="PRK05454.2-1"/>
    <property type="match status" value="1"/>
</dbReference>
<dbReference type="NCBIfam" id="NF003962">
    <property type="entry name" value="PRK05454.2-5"/>
    <property type="match status" value="1"/>
</dbReference>
<dbReference type="PANTHER" id="PTHR43867">
    <property type="entry name" value="CELLULOSE SYNTHASE CATALYTIC SUBUNIT A [UDP-FORMING]"/>
    <property type="match status" value="1"/>
</dbReference>
<dbReference type="PANTHER" id="PTHR43867:SF5">
    <property type="entry name" value="GLUCANS BIOSYNTHESIS GLUCOSYLTRANSFERASE H"/>
    <property type="match status" value="1"/>
</dbReference>
<dbReference type="Pfam" id="PF00535">
    <property type="entry name" value="Glycos_transf_2"/>
    <property type="match status" value="1"/>
</dbReference>
<dbReference type="SUPFAM" id="SSF53448">
    <property type="entry name" value="Nucleotide-diphospho-sugar transferases"/>
    <property type="match status" value="1"/>
</dbReference>
<proteinExistence type="evidence at transcript level"/>
<accession>P20401</accession>
<evidence type="ECO:0000250" key="1"/>
<evidence type="ECO:0000255" key="2"/>
<evidence type="ECO:0000305" key="3"/>
<keyword id="KW-0997">Cell inner membrane</keyword>
<keyword id="KW-1003">Cell membrane</keyword>
<keyword id="KW-0328">Glycosyltransferase</keyword>
<keyword id="KW-0472">Membrane</keyword>
<keyword id="KW-0808">Transferase</keyword>
<keyword id="KW-0812">Transmembrane</keyword>
<keyword id="KW-1133">Transmembrane helix</keyword>
<feature type="chain" id="PRO_0000210357" description="Glucans biosynthesis glucosyltransferase H">
    <location>
        <begin position="1"/>
        <end position="804"/>
    </location>
</feature>
<feature type="transmembrane region" description="Helical" evidence="2">
    <location>
        <begin position="146"/>
        <end position="166"/>
    </location>
</feature>
<feature type="transmembrane region" description="Helical" evidence="2">
    <location>
        <begin position="200"/>
        <end position="220"/>
    </location>
</feature>
<feature type="transmembrane region" description="Helical" evidence="2">
    <location>
        <begin position="519"/>
        <end position="539"/>
    </location>
</feature>
<feature type="transmembrane region" description="Helical" evidence="2">
    <location>
        <begin position="576"/>
        <end position="596"/>
    </location>
</feature>
<feature type="transmembrane region" description="Helical" evidence="2">
    <location>
        <begin position="610"/>
        <end position="630"/>
    </location>
</feature>
<feature type="transmembrane region" description="Helical" evidence="2">
    <location>
        <begin position="686"/>
        <end position="706"/>
    </location>
</feature>